<keyword id="KW-0030">Aminoacyl-tRNA synthetase</keyword>
<keyword id="KW-0067">ATP-binding</keyword>
<keyword id="KW-0963">Cytoplasm</keyword>
<keyword id="KW-0436">Ligase</keyword>
<keyword id="KW-0460">Magnesium</keyword>
<keyword id="KW-0479">Metal-binding</keyword>
<keyword id="KW-0547">Nucleotide-binding</keyword>
<keyword id="KW-0648">Protein biosynthesis</keyword>
<keyword id="KW-1185">Reference proteome</keyword>
<keyword id="KW-0694">RNA-binding</keyword>
<keyword id="KW-0820">tRNA-binding</keyword>
<protein>
    <recommendedName>
        <fullName evidence="1">Phenylalanine--tRNA ligase beta subunit</fullName>
        <ecNumber evidence="1">6.1.1.20</ecNumber>
    </recommendedName>
    <alternativeName>
        <fullName evidence="1">Phenylalanyl-tRNA synthetase beta subunit</fullName>
        <shortName evidence="1">PheRS</shortName>
    </alternativeName>
</protein>
<name>SYFB_THEVB</name>
<evidence type="ECO:0000255" key="1">
    <source>
        <dbReference type="HAMAP-Rule" id="MF_00283"/>
    </source>
</evidence>
<evidence type="ECO:0000305" key="2"/>
<proteinExistence type="inferred from homology"/>
<dbReference type="EC" id="6.1.1.20" evidence="1"/>
<dbReference type="EMBL" id="BA000039">
    <property type="protein sequence ID" value="BAC08213.1"/>
    <property type="status" value="ALT_INIT"/>
    <property type="molecule type" value="Genomic_DNA"/>
</dbReference>
<dbReference type="RefSeq" id="NP_681451.1">
    <property type="nucleotide sequence ID" value="NC_004113.1"/>
</dbReference>
<dbReference type="RefSeq" id="WP_164920733.1">
    <property type="nucleotide sequence ID" value="NC_004113.1"/>
</dbReference>
<dbReference type="SMR" id="Q8DL37"/>
<dbReference type="STRING" id="197221.gene:10747252"/>
<dbReference type="EnsemblBacteria" id="BAC08213">
    <property type="protein sequence ID" value="BAC08213"/>
    <property type="gene ID" value="BAC08213"/>
</dbReference>
<dbReference type="KEGG" id="tel:tll0662"/>
<dbReference type="PATRIC" id="fig|197221.4.peg.701"/>
<dbReference type="eggNOG" id="COG0072">
    <property type="taxonomic scope" value="Bacteria"/>
</dbReference>
<dbReference type="eggNOG" id="COG0073">
    <property type="taxonomic scope" value="Bacteria"/>
</dbReference>
<dbReference type="Proteomes" id="UP000000440">
    <property type="component" value="Chromosome"/>
</dbReference>
<dbReference type="GO" id="GO:0009328">
    <property type="term" value="C:phenylalanine-tRNA ligase complex"/>
    <property type="evidence" value="ECO:0007669"/>
    <property type="project" value="TreeGrafter"/>
</dbReference>
<dbReference type="GO" id="GO:0005524">
    <property type="term" value="F:ATP binding"/>
    <property type="evidence" value="ECO:0007669"/>
    <property type="project" value="UniProtKB-UniRule"/>
</dbReference>
<dbReference type="GO" id="GO:0000287">
    <property type="term" value="F:magnesium ion binding"/>
    <property type="evidence" value="ECO:0007669"/>
    <property type="project" value="UniProtKB-UniRule"/>
</dbReference>
<dbReference type="GO" id="GO:0004826">
    <property type="term" value="F:phenylalanine-tRNA ligase activity"/>
    <property type="evidence" value="ECO:0007669"/>
    <property type="project" value="UniProtKB-UniRule"/>
</dbReference>
<dbReference type="GO" id="GO:0000049">
    <property type="term" value="F:tRNA binding"/>
    <property type="evidence" value="ECO:0007669"/>
    <property type="project" value="UniProtKB-KW"/>
</dbReference>
<dbReference type="GO" id="GO:0006432">
    <property type="term" value="P:phenylalanyl-tRNA aminoacylation"/>
    <property type="evidence" value="ECO:0007669"/>
    <property type="project" value="UniProtKB-UniRule"/>
</dbReference>
<dbReference type="CDD" id="cd00769">
    <property type="entry name" value="PheRS_beta_core"/>
    <property type="match status" value="1"/>
</dbReference>
<dbReference type="CDD" id="cd02796">
    <property type="entry name" value="tRNA_bind_bactPheRS"/>
    <property type="match status" value="1"/>
</dbReference>
<dbReference type="FunFam" id="2.40.50.140:FF:000045">
    <property type="entry name" value="Phenylalanine--tRNA ligase beta subunit"/>
    <property type="match status" value="1"/>
</dbReference>
<dbReference type="FunFam" id="3.50.40.10:FF:000001">
    <property type="entry name" value="Phenylalanine--tRNA ligase beta subunit"/>
    <property type="match status" value="1"/>
</dbReference>
<dbReference type="Gene3D" id="3.30.56.10">
    <property type="match status" value="2"/>
</dbReference>
<dbReference type="Gene3D" id="3.30.930.10">
    <property type="entry name" value="Bira Bifunctional Protein, Domain 2"/>
    <property type="match status" value="1"/>
</dbReference>
<dbReference type="Gene3D" id="3.30.70.380">
    <property type="entry name" value="Ferrodoxin-fold anticodon-binding domain"/>
    <property type="match status" value="1"/>
</dbReference>
<dbReference type="Gene3D" id="2.40.50.140">
    <property type="entry name" value="Nucleic acid-binding proteins"/>
    <property type="match status" value="1"/>
</dbReference>
<dbReference type="Gene3D" id="3.50.40.10">
    <property type="entry name" value="Phenylalanyl-trna Synthetase, Chain B, domain 3"/>
    <property type="match status" value="1"/>
</dbReference>
<dbReference type="HAMAP" id="MF_00283">
    <property type="entry name" value="Phe_tRNA_synth_beta1"/>
    <property type="match status" value="1"/>
</dbReference>
<dbReference type="InterPro" id="IPR045864">
    <property type="entry name" value="aa-tRNA-synth_II/BPL/LPL"/>
</dbReference>
<dbReference type="InterPro" id="IPR005146">
    <property type="entry name" value="B3/B4_tRNA-bd"/>
</dbReference>
<dbReference type="InterPro" id="IPR009061">
    <property type="entry name" value="DNA-bd_dom_put_sf"/>
</dbReference>
<dbReference type="InterPro" id="IPR005121">
    <property type="entry name" value="Fdx_antiC-bd"/>
</dbReference>
<dbReference type="InterPro" id="IPR036690">
    <property type="entry name" value="Fdx_antiC-bd_sf"/>
</dbReference>
<dbReference type="InterPro" id="IPR012340">
    <property type="entry name" value="NA-bd_OB-fold"/>
</dbReference>
<dbReference type="InterPro" id="IPR045060">
    <property type="entry name" value="Phe-tRNA-ligase_IIc_bsu"/>
</dbReference>
<dbReference type="InterPro" id="IPR004532">
    <property type="entry name" value="Phe-tRNA-ligase_IIc_bsu_bact"/>
</dbReference>
<dbReference type="InterPro" id="IPR020825">
    <property type="entry name" value="Phe-tRNA_synthase-like_B3/B4"/>
</dbReference>
<dbReference type="InterPro" id="IPR041616">
    <property type="entry name" value="PheRS_beta_core"/>
</dbReference>
<dbReference type="InterPro" id="IPR002547">
    <property type="entry name" value="tRNA-bd_dom"/>
</dbReference>
<dbReference type="InterPro" id="IPR033714">
    <property type="entry name" value="tRNA_bind_bactPheRS"/>
</dbReference>
<dbReference type="InterPro" id="IPR005147">
    <property type="entry name" value="tRNA_synthase_B5-dom"/>
</dbReference>
<dbReference type="NCBIfam" id="TIGR00472">
    <property type="entry name" value="pheT_bact"/>
    <property type="match status" value="1"/>
</dbReference>
<dbReference type="NCBIfam" id="NF045760">
    <property type="entry name" value="YtpR"/>
    <property type="match status" value="1"/>
</dbReference>
<dbReference type="PANTHER" id="PTHR10947:SF0">
    <property type="entry name" value="PHENYLALANINE--TRNA LIGASE BETA SUBUNIT"/>
    <property type="match status" value="1"/>
</dbReference>
<dbReference type="PANTHER" id="PTHR10947">
    <property type="entry name" value="PHENYLALANYL-TRNA SYNTHETASE BETA CHAIN AND LEUCINE-RICH REPEAT-CONTAINING PROTEIN 47"/>
    <property type="match status" value="1"/>
</dbReference>
<dbReference type="Pfam" id="PF03483">
    <property type="entry name" value="B3_4"/>
    <property type="match status" value="1"/>
</dbReference>
<dbReference type="Pfam" id="PF03484">
    <property type="entry name" value="B5"/>
    <property type="match status" value="1"/>
</dbReference>
<dbReference type="Pfam" id="PF03147">
    <property type="entry name" value="FDX-ACB"/>
    <property type="match status" value="1"/>
</dbReference>
<dbReference type="Pfam" id="PF01588">
    <property type="entry name" value="tRNA_bind"/>
    <property type="match status" value="1"/>
</dbReference>
<dbReference type="Pfam" id="PF17759">
    <property type="entry name" value="tRNA_synthFbeta"/>
    <property type="match status" value="1"/>
</dbReference>
<dbReference type="SMART" id="SM00873">
    <property type="entry name" value="B3_4"/>
    <property type="match status" value="1"/>
</dbReference>
<dbReference type="SMART" id="SM00874">
    <property type="entry name" value="B5"/>
    <property type="match status" value="1"/>
</dbReference>
<dbReference type="SMART" id="SM00896">
    <property type="entry name" value="FDX-ACB"/>
    <property type="match status" value="1"/>
</dbReference>
<dbReference type="SUPFAM" id="SSF54991">
    <property type="entry name" value="Anticodon-binding domain of PheRS"/>
    <property type="match status" value="1"/>
</dbReference>
<dbReference type="SUPFAM" id="SSF55681">
    <property type="entry name" value="Class II aaRS and biotin synthetases"/>
    <property type="match status" value="1"/>
</dbReference>
<dbReference type="SUPFAM" id="SSF50249">
    <property type="entry name" value="Nucleic acid-binding proteins"/>
    <property type="match status" value="1"/>
</dbReference>
<dbReference type="SUPFAM" id="SSF56037">
    <property type="entry name" value="PheT/TilS domain"/>
    <property type="match status" value="1"/>
</dbReference>
<dbReference type="SUPFAM" id="SSF46955">
    <property type="entry name" value="Putative DNA-binding domain"/>
    <property type="match status" value="1"/>
</dbReference>
<dbReference type="PROSITE" id="PS51483">
    <property type="entry name" value="B5"/>
    <property type="match status" value="1"/>
</dbReference>
<dbReference type="PROSITE" id="PS51447">
    <property type="entry name" value="FDX_ACB"/>
    <property type="match status" value="1"/>
</dbReference>
<dbReference type="PROSITE" id="PS50886">
    <property type="entry name" value="TRBD"/>
    <property type="match status" value="1"/>
</dbReference>
<organism>
    <name type="scientific">Thermosynechococcus vestitus (strain NIES-2133 / IAM M-273 / BP-1)</name>
    <dbReference type="NCBI Taxonomy" id="197221"/>
    <lineage>
        <taxon>Bacteria</taxon>
        <taxon>Bacillati</taxon>
        <taxon>Cyanobacteriota</taxon>
        <taxon>Cyanophyceae</taxon>
        <taxon>Acaryochloridales</taxon>
        <taxon>Thermosynechococcaceae</taxon>
        <taxon>Thermosynechococcus</taxon>
    </lineage>
</organism>
<sequence length="821" mass="90559">MRVSLRWLRELVAVDLDVTMLADRLTMAGFEVEDIEDRRTWAEGVVVGYILACEPHPNAQKLRVCQVDVGQGEPRTIVCGAPNAAAGLYVPVALPGAYLAKIDLKIRPAKLRGVKSEGMICSLAELGLTKESEGIHTFTDAVTVGEDVRPLLGLDDVILHLTSTANRADALSMVGIAREVAALTGAPLTLPTPRAIAPKKSGAKGPVQLAIADPQACPAYCGTLITHVQIAPSPLWLQQRLEAAGLRAINNVVDITNYILLKWGQPLHAFDWDRLQKVAAQTPVSVGVRFAKAGETLKTLDGQERRLSSENLLITAGDVPVALAGVMGGEETEVHPGTQNVFLEAALFASPVIRRSARAQGLRTEASARYERGVNPAELEAATAEAIALLKEIAQGTVSDTTLADQRPPLERTLTLRLEQVHRLLGAVVSEAEDSDEPAYLDPETVEELLSRLGFHLSRQETLEDELVVWSVTVPPYRFRDIEREVDLIEEIARLYGYDRFEETLPAQTEVGALPLELTLLREVRAAFRGAGLTELMHYSWVKGGQPNQVTVVNPLVAEFSSLRTDLITGLVQAFRYNHEQGNPPLNGFEIGRVFGQDEEGLWENDRLGGIIGGDPWQGKWVRRSQQPQPLTWYEAKGILESVFQRFGLNVEYQSDRHDERLHPGRTAVLCLQGERLGIFGQLHPQYAATLEIPAAIYVFELDLEVLLSRLEERYRQIVFQPFSTYPASDRDLAFFAPTALTVAELSRTIWKAAGGRDSFLESVELFDEYSGSGVPAGQRSLAFRLTYRASDRTLTEAEVNELHQRIRDSLVEKYAVTLRS</sequence>
<comment type="catalytic activity">
    <reaction evidence="1">
        <text>tRNA(Phe) + L-phenylalanine + ATP = L-phenylalanyl-tRNA(Phe) + AMP + diphosphate + H(+)</text>
        <dbReference type="Rhea" id="RHEA:19413"/>
        <dbReference type="Rhea" id="RHEA-COMP:9668"/>
        <dbReference type="Rhea" id="RHEA-COMP:9699"/>
        <dbReference type="ChEBI" id="CHEBI:15378"/>
        <dbReference type="ChEBI" id="CHEBI:30616"/>
        <dbReference type="ChEBI" id="CHEBI:33019"/>
        <dbReference type="ChEBI" id="CHEBI:58095"/>
        <dbReference type="ChEBI" id="CHEBI:78442"/>
        <dbReference type="ChEBI" id="CHEBI:78531"/>
        <dbReference type="ChEBI" id="CHEBI:456215"/>
        <dbReference type="EC" id="6.1.1.20"/>
    </reaction>
</comment>
<comment type="cofactor">
    <cofactor evidence="1">
        <name>Mg(2+)</name>
        <dbReference type="ChEBI" id="CHEBI:18420"/>
    </cofactor>
    <text evidence="1">Binds 2 magnesium ions per tetramer.</text>
</comment>
<comment type="subunit">
    <text evidence="1">Tetramer of two alpha and two beta subunits.</text>
</comment>
<comment type="subcellular location">
    <subcellularLocation>
        <location evidence="1">Cytoplasm</location>
    </subcellularLocation>
</comment>
<comment type="similarity">
    <text evidence="1">Belongs to the phenylalanyl-tRNA synthetase beta subunit family. Type 1 subfamily.</text>
</comment>
<comment type="sequence caution" evidence="2">
    <conflict type="erroneous initiation">
        <sequence resource="EMBL-CDS" id="BAC08213"/>
    </conflict>
</comment>
<gene>
    <name evidence="1" type="primary">pheT</name>
    <name type="ordered locus">tll0662</name>
</gene>
<accession>Q8DL37</accession>
<feature type="chain" id="PRO_0000126970" description="Phenylalanine--tRNA ligase beta subunit">
    <location>
        <begin position="1"/>
        <end position="821"/>
    </location>
</feature>
<feature type="domain" description="tRNA-binding" evidence="1">
    <location>
        <begin position="39"/>
        <end position="149"/>
    </location>
</feature>
<feature type="domain" description="B5" evidence="1">
    <location>
        <begin position="409"/>
        <end position="503"/>
    </location>
</feature>
<feature type="domain" description="FDX-ACB" evidence="1">
    <location>
        <begin position="724"/>
        <end position="820"/>
    </location>
</feature>
<feature type="binding site" evidence="1">
    <location>
        <position position="481"/>
    </location>
    <ligand>
        <name>Mg(2+)</name>
        <dbReference type="ChEBI" id="CHEBI:18420"/>
        <note>shared with alpha subunit</note>
    </ligand>
</feature>
<feature type="binding site" evidence="1">
    <location>
        <position position="487"/>
    </location>
    <ligand>
        <name>Mg(2+)</name>
        <dbReference type="ChEBI" id="CHEBI:18420"/>
        <note>shared with alpha subunit</note>
    </ligand>
</feature>
<feature type="binding site" evidence="1">
    <location>
        <position position="490"/>
    </location>
    <ligand>
        <name>Mg(2+)</name>
        <dbReference type="ChEBI" id="CHEBI:18420"/>
        <note>shared with alpha subunit</note>
    </ligand>
</feature>
<feature type="binding site" evidence="1">
    <location>
        <position position="491"/>
    </location>
    <ligand>
        <name>Mg(2+)</name>
        <dbReference type="ChEBI" id="CHEBI:18420"/>
        <note>shared with alpha subunit</note>
    </ligand>
</feature>
<reference key="1">
    <citation type="journal article" date="2002" name="DNA Res.">
        <title>Complete genome structure of the thermophilic cyanobacterium Thermosynechococcus elongatus BP-1.</title>
        <authorList>
            <person name="Nakamura Y."/>
            <person name="Kaneko T."/>
            <person name="Sato S."/>
            <person name="Ikeuchi M."/>
            <person name="Katoh H."/>
            <person name="Sasamoto S."/>
            <person name="Watanabe A."/>
            <person name="Iriguchi M."/>
            <person name="Kawashima K."/>
            <person name="Kimura T."/>
            <person name="Kishida Y."/>
            <person name="Kiyokawa C."/>
            <person name="Kohara M."/>
            <person name="Matsumoto M."/>
            <person name="Matsuno A."/>
            <person name="Nakazaki N."/>
            <person name="Shimpo S."/>
            <person name="Sugimoto M."/>
            <person name="Takeuchi C."/>
            <person name="Yamada M."/>
            <person name="Tabata S."/>
        </authorList>
    </citation>
    <scope>NUCLEOTIDE SEQUENCE [LARGE SCALE GENOMIC DNA]</scope>
    <source>
        <strain>NIES-2133 / IAM M-273 / BP-1</strain>
    </source>
</reference>